<reference key="1">
    <citation type="submission" date="2006-12" db="EMBL/GenBank/DDBJ databases">
        <title>Complete sequence of chromosome 2 of Paracoccus denitrificans PD1222.</title>
        <authorList>
            <person name="Copeland A."/>
            <person name="Lucas S."/>
            <person name="Lapidus A."/>
            <person name="Barry K."/>
            <person name="Detter J.C."/>
            <person name="Glavina del Rio T."/>
            <person name="Hammon N."/>
            <person name="Israni S."/>
            <person name="Dalin E."/>
            <person name="Tice H."/>
            <person name="Pitluck S."/>
            <person name="Munk A.C."/>
            <person name="Brettin T."/>
            <person name="Bruce D."/>
            <person name="Han C."/>
            <person name="Tapia R."/>
            <person name="Gilna P."/>
            <person name="Schmutz J."/>
            <person name="Larimer F."/>
            <person name="Land M."/>
            <person name="Hauser L."/>
            <person name="Kyrpides N."/>
            <person name="Lykidis A."/>
            <person name="Spiro S."/>
            <person name="Richardson D.J."/>
            <person name="Moir J.W.B."/>
            <person name="Ferguson S.J."/>
            <person name="van Spanning R.J.M."/>
            <person name="Richardson P."/>
        </authorList>
    </citation>
    <scope>NUCLEOTIDE SEQUENCE [LARGE SCALE GENOMIC DNA]</scope>
    <source>
        <strain>Pd 1222</strain>
    </source>
</reference>
<organism>
    <name type="scientific">Paracoccus denitrificans (strain Pd 1222)</name>
    <dbReference type="NCBI Taxonomy" id="318586"/>
    <lineage>
        <taxon>Bacteria</taxon>
        <taxon>Pseudomonadati</taxon>
        <taxon>Pseudomonadota</taxon>
        <taxon>Alphaproteobacteria</taxon>
        <taxon>Rhodobacterales</taxon>
        <taxon>Paracoccaceae</taxon>
        <taxon>Paracoccus</taxon>
    </lineage>
</organism>
<keyword id="KW-0131">Cell cycle</keyword>
<keyword id="KW-0132">Cell division</keyword>
<keyword id="KW-0997">Cell inner membrane</keyword>
<keyword id="KW-1003">Cell membrane</keyword>
<keyword id="KW-0472">Membrane</keyword>
<keyword id="KW-1185">Reference proteome</keyword>
<keyword id="KW-0812">Transmembrane</keyword>
<keyword id="KW-1133">Transmembrane helix</keyword>
<protein>
    <recommendedName>
        <fullName evidence="1">Cell division protein FtsQ</fullName>
    </recommendedName>
</protein>
<name>FTSQ_PARDP</name>
<gene>
    <name evidence="1" type="primary">ftsQ</name>
    <name type="ordered locus">Pden_4489</name>
</gene>
<dbReference type="EMBL" id="CP000490">
    <property type="protein sequence ID" value="ABL72553.1"/>
    <property type="molecule type" value="Genomic_DNA"/>
</dbReference>
<dbReference type="RefSeq" id="WP_011750714.1">
    <property type="nucleotide sequence ID" value="NC_008687.1"/>
</dbReference>
<dbReference type="SMR" id="A1BAK9"/>
<dbReference type="STRING" id="318586.Pden_4489"/>
<dbReference type="EnsemblBacteria" id="ABL72553">
    <property type="protein sequence ID" value="ABL72553"/>
    <property type="gene ID" value="Pden_4489"/>
</dbReference>
<dbReference type="GeneID" id="93454154"/>
<dbReference type="KEGG" id="pde:Pden_4489"/>
<dbReference type="eggNOG" id="COG1589">
    <property type="taxonomic scope" value="Bacteria"/>
</dbReference>
<dbReference type="HOGENOM" id="CLU_061141_0_0_5"/>
<dbReference type="OrthoDB" id="9783091at2"/>
<dbReference type="Proteomes" id="UP000000361">
    <property type="component" value="Chromosome 2"/>
</dbReference>
<dbReference type="GO" id="GO:0032153">
    <property type="term" value="C:cell division site"/>
    <property type="evidence" value="ECO:0007669"/>
    <property type="project" value="UniProtKB-UniRule"/>
</dbReference>
<dbReference type="GO" id="GO:0005886">
    <property type="term" value="C:plasma membrane"/>
    <property type="evidence" value="ECO:0007669"/>
    <property type="project" value="UniProtKB-SubCell"/>
</dbReference>
<dbReference type="GO" id="GO:0090529">
    <property type="term" value="P:cell septum assembly"/>
    <property type="evidence" value="ECO:0007669"/>
    <property type="project" value="InterPro"/>
</dbReference>
<dbReference type="GO" id="GO:0043093">
    <property type="term" value="P:FtsZ-dependent cytokinesis"/>
    <property type="evidence" value="ECO:0007669"/>
    <property type="project" value="UniProtKB-UniRule"/>
</dbReference>
<dbReference type="Gene3D" id="3.40.50.11690">
    <property type="entry name" value="Cell division protein FtsQ/DivIB"/>
    <property type="match status" value="1"/>
</dbReference>
<dbReference type="HAMAP" id="MF_00911">
    <property type="entry name" value="FtsQ_subfam"/>
    <property type="match status" value="1"/>
</dbReference>
<dbReference type="InterPro" id="IPR005548">
    <property type="entry name" value="Cell_div_FtsQ/DivIB_C"/>
</dbReference>
<dbReference type="InterPro" id="IPR026579">
    <property type="entry name" value="FtsQ"/>
</dbReference>
<dbReference type="InterPro" id="IPR045335">
    <property type="entry name" value="FtsQ_C_sf"/>
</dbReference>
<dbReference type="InterPro" id="IPR034746">
    <property type="entry name" value="POTRA"/>
</dbReference>
<dbReference type="PANTHER" id="PTHR35851">
    <property type="entry name" value="CELL DIVISION PROTEIN FTSQ"/>
    <property type="match status" value="1"/>
</dbReference>
<dbReference type="PANTHER" id="PTHR35851:SF1">
    <property type="entry name" value="CELL DIVISION PROTEIN FTSQ"/>
    <property type="match status" value="1"/>
</dbReference>
<dbReference type="Pfam" id="PF03799">
    <property type="entry name" value="FtsQ_DivIB_C"/>
    <property type="match status" value="1"/>
</dbReference>
<dbReference type="PROSITE" id="PS51779">
    <property type="entry name" value="POTRA"/>
    <property type="match status" value="1"/>
</dbReference>
<feature type="chain" id="PRO_0000414685" description="Cell division protein FtsQ">
    <location>
        <begin position="1"/>
        <end position="340"/>
    </location>
</feature>
<feature type="topological domain" description="Cytoplasmic" evidence="1">
    <location>
        <begin position="1"/>
        <end position="55"/>
    </location>
</feature>
<feature type="transmembrane region" description="Helical" evidence="1">
    <location>
        <begin position="56"/>
        <end position="78"/>
    </location>
</feature>
<feature type="topological domain" description="Periplasmic" evidence="1">
    <location>
        <begin position="79"/>
        <end position="340"/>
    </location>
</feature>
<feature type="domain" description="POTRA" evidence="2">
    <location>
        <begin position="104"/>
        <end position="172"/>
    </location>
</feature>
<feature type="region of interest" description="Disordered" evidence="3">
    <location>
        <begin position="1"/>
        <end position="41"/>
    </location>
</feature>
<feature type="region of interest" description="Disordered" evidence="3">
    <location>
        <begin position="308"/>
        <end position="340"/>
    </location>
</feature>
<feature type="compositionally biased region" description="Pro residues" evidence="3">
    <location>
        <begin position="19"/>
        <end position="32"/>
    </location>
</feature>
<feature type="compositionally biased region" description="Low complexity" evidence="3">
    <location>
        <begin position="324"/>
        <end position="333"/>
    </location>
</feature>
<evidence type="ECO:0000255" key="1">
    <source>
        <dbReference type="HAMAP-Rule" id="MF_00911"/>
    </source>
</evidence>
<evidence type="ECO:0000255" key="2">
    <source>
        <dbReference type="PROSITE-ProRule" id="PRU01115"/>
    </source>
</evidence>
<evidence type="ECO:0000256" key="3">
    <source>
        <dbReference type="SAM" id="MobiDB-lite"/>
    </source>
</evidence>
<comment type="function">
    <text evidence="1">Essential cell division protein.</text>
</comment>
<comment type="subcellular location">
    <subcellularLocation>
        <location evidence="1">Cell inner membrane</location>
        <topology evidence="1">Single-pass type II membrane protein</topology>
    </subcellularLocation>
    <text evidence="1">Localizes to the division septum.</text>
</comment>
<comment type="similarity">
    <text evidence="1">Belongs to the FtsQ/DivIB family. FtsQ subfamily.</text>
</comment>
<sequence>MQGLNPFHRDQGAGGRPAPVRPAPARPAPVAPRTPRKDPAPSRLAYRLNRMMLRPLVRRLVHVGLPAFLAALVAGIWLSDDTRRANLTGGIDAIVDRIQHRDEFMVKMMTIEGASPVVDKGLRAMLPVELPASSFEIDLEKLRERVLKLDAVETVDLRIKPGGVLSAVVTERVPVVLWRHARGIELLDKTGHRVASVTSREVRGDLPIIAGEGADRAAPEALALIDAAGPILPRLRGLERMGERRWDVVLDHGQRIKLPEDKALQALERAIALNGALHMLDRDISVVDLRQEARPVVRLGLEAQNAIRQARGQPELGPDGTPLAPEATAGNAAKAKKKSG</sequence>
<proteinExistence type="inferred from homology"/>
<accession>A1BAK9</accession>